<accession>A5VNQ9</accession>
<evidence type="ECO:0000255" key="1">
    <source>
        <dbReference type="HAMAP-Rule" id="MF_00115"/>
    </source>
</evidence>
<reference key="1">
    <citation type="journal article" date="2009" name="PLoS ONE">
        <title>Genome degradation in Brucella ovis corresponds with narrowing of its host range and tissue tropism.</title>
        <authorList>
            <person name="Tsolis R.M."/>
            <person name="Seshadri R."/>
            <person name="Santos R.L."/>
            <person name="Sangari F.J."/>
            <person name="Lobo J.M."/>
            <person name="de Jong M.F."/>
            <person name="Ren Q."/>
            <person name="Myers G."/>
            <person name="Brinkac L.M."/>
            <person name="Nelson W.C."/>
            <person name="Deboy R.T."/>
            <person name="Angiuoli S."/>
            <person name="Khouri H."/>
            <person name="Dimitrov G."/>
            <person name="Robinson J.R."/>
            <person name="Mulligan S."/>
            <person name="Walker R.L."/>
            <person name="Elzer P.E."/>
            <person name="Hassan K.A."/>
            <person name="Paulsen I.T."/>
        </authorList>
    </citation>
    <scope>NUCLEOTIDE SEQUENCE [LARGE SCALE GENOMIC DNA]</scope>
    <source>
        <strain>ATCC 25840 / 63/290 / NCTC 10512</strain>
    </source>
</reference>
<protein>
    <recommendedName>
        <fullName evidence="1">Large-conductance mechanosensitive channel</fullName>
    </recommendedName>
</protein>
<dbReference type="EMBL" id="CP000708">
    <property type="protein sequence ID" value="ABQ60269.1"/>
    <property type="molecule type" value="Genomic_DNA"/>
</dbReference>
<dbReference type="RefSeq" id="WP_005978177.1">
    <property type="nucleotide sequence ID" value="NC_009505.1"/>
</dbReference>
<dbReference type="SMR" id="A5VNQ9"/>
<dbReference type="GeneID" id="45123819"/>
<dbReference type="KEGG" id="bov:BOV_0334"/>
<dbReference type="HOGENOM" id="CLU_095787_0_1_5"/>
<dbReference type="PhylomeDB" id="A5VNQ9"/>
<dbReference type="Proteomes" id="UP000006383">
    <property type="component" value="Chromosome I"/>
</dbReference>
<dbReference type="GO" id="GO:0005886">
    <property type="term" value="C:plasma membrane"/>
    <property type="evidence" value="ECO:0007669"/>
    <property type="project" value="UniProtKB-SubCell"/>
</dbReference>
<dbReference type="GO" id="GO:0008381">
    <property type="term" value="F:mechanosensitive monoatomic ion channel activity"/>
    <property type="evidence" value="ECO:0007669"/>
    <property type="project" value="UniProtKB-UniRule"/>
</dbReference>
<dbReference type="Gene3D" id="1.10.1200.120">
    <property type="entry name" value="Large-conductance mechanosensitive channel, MscL, domain 1"/>
    <property type="match status" value="1"/>
</dbReference>
<dbReference type="HAMAP" id="MF_00115">
    <property type="entry name" value="MscL"/>
    <property type="match status" value="1"/>
</dbReference>
<dbReference type="InterPro" id="IPR019823">
    <property type="entry name" value="Mechanosensitive_channel_CS"/>
</dbReference>
<dbReference type="InterPro" id="IPR001185">
    <property type="entry name" value="MS_channel"/>
</dbReference>
<dbReference type="InterPro" id="IPR037673">
    <property type="entry name" value="MSC/AndL"/>
</dbReference>
<dbReference type="InterPro" id="IPR036019">
    <property type="entry name" value="MscL_channel"/>
</dbReference>
<dbReference type="NCBIfam" id="TIGR00220">
    <property type="entry name" value="mscL"/>
    <property type="match status" value="1"/>
</dbReference>
<dbReference type="NCBIfam" id="NF001843">
    <property type="entry name" value="PRK00567.1-4"/>
    <property type="match status" value="1"/>
</dbReference>
<dbReference type="NCBIfam" id="NF010557">
    <property type="entry name" value="PRK13952.1"/>
    <property type="match status" value="1"/>
</dbReference>
<dbReference type="PANTHER" id="PTHR30266:SF2">
    <property type="entry name" value="LARGE-CONDUCTANCE MECHANOSENSITIVE CHANNEL"/>
    <property type="match status" value="1"/>
</dbReference>
<dbReference type="PANTHER" id="PTHR30266">
    <property type="entry name" value="MECHANOSENSITIVE CHANNEL MSCL"/>
    <property type="match status" value="1"/>
</dbReference>
<dbReference type="Pfam" id="PF01741">
    <property type="entry name" value="MscL"/>
    <property type="match status" value="1"/>
</dbReference>
<dbReference type="PRINTS" id="PR01264">
    <property type="entry name" value="MECHCHANNEL"/>
</dbReference>
<dbReference type="SUPFAM" id="SSF81330">
    <property type="entry name" value="Gated mechanosensitive channel"/>
    <property type="match status" value="1"/>
</dbReference>
<dbReference type="PROSITE" id="PS01327">
    <property type="entry name" value="MSCL"/>
    <property type="match status" value="1"/>
</dbReference>
<name>MSCL_BRUO2</name>
<gene>
    <name evidence="1" type="primary">mscL</name>
    <name type="ordered locus">BOV_0334</name>
</gene>
<keyword id="KW-0997">Cell inner membrane</keyword>
<keyword id="KW-1003">Cell membrane</keyword>
<keyword id="KW-0407">Ion channel</keyword>
<keyword id="KW-0406">Ion transport</keyword>
<keyword id="KW-0472">Membrane</keyword>
<keyword id="KW-0812">Transmembrane</keyword>
<keyword id="KW-1133">Transmembrane helix</keyword>
<keyword id="KW-0813">Transport</keyword>
<proteinExistence type="inferred from homology"/>
<feature type="chain" id="PRO_1000015356" description="Large-conductance mechanosensitive channel">
    <location>
        <begin position="1"/>
        <end position="138"/>
    </location>
</feature>
<feature type="transmembrane region" description="Helical" evidence="1">
    <location>
        <begin position="15"/>
        <end position="35"/>
    </location>
</feature>
<feature type="transmembrane region" description="Helical" evidence="1">
    <location>
        <begin position="38"/>
        <end position="58"/>
    </location>
</feature>
<feature type="transmembrane region" description="Helical" evidence="1">
    <location>
        <begin position="80"/>
        <end position="100"/>
    </location>
</feature>
<organism>
    <name type="scientific">Brucella ovis (strain ATCC 25840 / 63/290 / NCTC 10512)</name>
    <dbReference type="NCBI Taxonomy" id="444178"/>
    <lineage>
        <taxon>Bacteria</taxon>
        <taxon>Pseudomonadati</taxon>
        <taxon>Pseudomonadota</taxon>
        <taxon>Alphaproteobacteria</taxon>
        <taxon>Hyphomicrobiales</taxon>
        <taxon>Brucellaceae</taxon>
        <taxon>Brucella/Ochrobactrum group</taxon>
        <taxon>Brucella</taxon>
    </lineage>
</organism>
<sequence length="138" mass="14917">MLKEFQEFALKGNMVDLAIGVIIGGAFGGLVNSIVNDIIMPIIGLITGGIDFSNMFIQLAGDPKTTLAAAREAGATIAYGNFITLLINFMIIAWVLFLVVKLMNRLKKREEAKPAPAAPSEEVLLTEIRDILAKQQKA</sequence>
<comment type="function">
    <text evidence="1">Channel that opens in response to stretch forces in the membrane lipid bilayer. May participate in the regulation of osmotic pressure changes within the cell.</text>
</comment>
<comment type="subunit">
    <text evidence="1">Homopentamer.</text>
</comment>
<comment type="subcellular location">
    <subcellularLocation>
        <location evidence="1">Cell inner membrane</location>
        <topology evidence="1">Multi-pass membrane protein</topology>
    </subcellularLocation>
</comment>
<comment type="similarity">
    <text evidence="1">Belongs to the MscL family.</text>
</comment>